<dbReference type="EC" id="1.2.1.70" evidence="1"/>
<dbReference type="EMBL" id="CP001172">
    <property type="protein sequence ID" value="ACJ58614.1"/>
    <property type="molecule type" value="Genomic_DNA"/>
</dbReference>
<dbReference type="RefSeq" id="WP_000007423.1">
    <property type="nucleotide sequence ID" value="NZ_CP001172.1"/>
</dbReference>
<dbReference type="SMR" id="B7GYQ4"/>
<dbReference type="HOGENOM" id="CLU_035113_2_2_6"/>
<dbReference type="UniPathway" id="UPA00251">
    <property type="reaction ID" value="UER00316"/>
</dbReference>
<dbReference type="Proteomes" id="UP000006924">
    <property type="component" value="Chromosome"/>
</dbReference>
<dbReference type="GO" id="GO:0008883">
    <property type="term" value="F:glutamyl-tRNA reductase activity"/>
    <property type="evidence" value="ECO:0007669"/>
    <property type="project" value="UniProtKB-UniRule"/>
</dbReference>
<dbReference type="GO" id="GO:0050661">
    <property type="term" value="F:NADP binding"/>
    <property type="evidence" value="ECO:0007669"/>
    <property type="project" value="InterPro"/>
</dbReference>
<dbReference type="GO" id="GO:0019353">
    <property type="term" value="P:protoporphyrinogen IX biosynthetic process from glutamate"/>
    <property type="evidence" value="ECO:0007669"/>
    <property type="project" value="TreeGrafter"/>
</dbReference>
<dbReference type="CDD" id="cd05213">
    <property type="entry name" value="NAD_bind_Glutamyl_tRNA_reduct"/>
    <property type="match status" value="1"/>
</dbReference>
<dbReference type="FunFam" id="3.30.460.30:FF:000001">
    <property type="entry name" value="Glutamyl-tRNA reductase"/>
    <property type="match status" value="1"/>
</dbReference>
<dbReference type="FunFam" id="3.40.50.720:FF:000031">
    <property type="entry name" value="Glutamyl-tRNA reductase"/>
    <property type="match status" value="1"/>
</dbReference>
<dbReference type="Gene3D" id="3.30.460.30">
    <property type="entry name" value="Glutamyl-tRNA reductase, N-terminal domain"/>
    <property type="match status" value="1"/>
</dbReference>
<dbReference type="Gene3D" id="3.40.50.720">
    <property type="entry name" value="NAD(P)-binding Rossmann-like Domain"/>
    <property type="match status" value="1"/>
</dbReference>
<dbReference type="HAMAP" id="MF_00087">
    <property type="entry name" value="Glu_tRNA_reductase"/>
    <property type="match status" value="1"/>
</dbReference>
<dbReference type="InterPro" id="IPR000343">
    <property type="entry name" value="4pyrrol_synth_GluRdtase"/>
</dbReference>
<dbReference type="InterPro" id="IPR015896">
    <property type="entry name" value="4pyrrol_synth_GluRdtase_dimer"/>
</dbReference>
<dbReference type="InterPro" id="IPR015895">
    <property type="entry name" value="4pyrrol_synth_GluRdtase_N"/>
</dbReference>
<dbReference type="InterPro" id="IPR018214">
    <property type="entry name" value="GluRdtase_CS"/>
</dbReference>
<dbReference type="InterPro" id="IPR036453">
    <property type="entry name" value="GluRdtase_dimer_dom_sf"/>
</dbReference>
<dbReference type="InterPro" id="IPR036343">
    <property type="entry name" value="GluRdtase_N_sf"/>
</dbReference>
<dbReference type="InterPro" id="IPR036291">
    <property type="entry name" value="NAD(P)-bd_dom_sf"/>
</dbReference>
<dbReference type="InterPro" id="IPR006151">
    <property type="entry name" value="Shikm_DH/Glu-tRNA_Rdtase"/>
</dbReference>
<dbReference type="NCBIfam" id="TIGR01035">
    <property type="entry name" value="hemA"/>
    <property type="match status" value="1"/>
</dbReference>
<dbReference type="PANTHER" id="PTHR43013">
    <property type="entry name" value="GLUTAMYL-TRNA REDUCTASE"/>
    <property type="match status" value="1"/>
</dbReference>
<dbReference type="PANTHER" id="PTHR43013:SF1">
    <property type="entry name" value="GLUTAMYL-TRNA REDUCTASE"/>
    <property type="match status" value="1"/>
</dbReference>
<dbReference type="Pfam" id="PF00745">
    <property type="entry name" value="GlutR_dimer"/>
    <property type="match status" value="1"/>
</dbReference>
<dbReference type="Pfam" id="PF05201">
    <property type="entry name" value="GlutR_N"/>
    <property type="match status" value="1"/>
</dbReference>
<dbReference type="Pfam" id="PF01488">
    <property type="entry name" value="Shikimate_DH"/>
    <property type="match status" value="1"/>
</dbReference>
<dbReference type="PIRSF" id="PIRSF000445">
    <property type="entry name" value="4pyrrol_synth_GluRdtase"/>
    <property type="match status" value="1"/>
</dbReference>
<dbReference type="SUPFAM" id="SSF69742">
    <property type="entry name" value="Glutamyl tRNA-reductase catalytic, N-terminal domain"/>
    <property type="match status" value="1"/>
</dbReference>
<dbReference type="SUPFAM" id="SSF69075">
    <property type="entry name" value="Glutamyl tRNA-reductase dimerization domain"/>
    <property type="match status" value="1"/>
</dbReference>
<dbReference type="SUPFAM" id="SSF51735">
    <property type="entry name" value="NAD(P)-binding Rossmann-fold domains"/>
    <property type="match status" value="1"/>
</dbReference>
<dbReference type="PROSITE" id="PS00747">
    <property type="entry name" value="GLUTR"/>
    <property type="match status" value="1"/>
</dbReference>
<comment type="function">
    <text evidence="1">Catalyzes the NADPH-dependent reduction of glutamyl-tRNA(Glu) to glutamate 1-semialdehyde (GSA).</text>
</comment>
<comment type="catalytic activity">
    <reaction evidence="1">
        <text>(S)-4-amino-5-oxopentanoate + tRNA(Glu) + NADP(+) = L-glutamyl-tRNA(Glu) + NADPH + H(+)</text>
        <dbReference type="Rhea" id="RHEA:12344"/>
        <dbReference type="Rhea" id="RHEA-COMP:9663"/>
        <dbReference type="Rhea" id="RHEA-COMP:9680"/>
        <dbReference type="ChEBI" id="CHEBI:15378"/>
        <dbReference type="ChEBI" id="CHEBI:57501"/>
        <dbReference type="ChEBI" id="CHEBI:57783"/>
        <dbReference type="ChEBI" id="CHEBI:58349"/>
        <dbReference type="ChEBI" id="CHEBI:78442"/>
        <dbReference type="ChEBI" id="CHEBI:78520"/>
        <dbReference type="EC" id="1.2.1.70"/>
    </reaction>
</comment>
<comment type="pathway">
    <text evidence="1">Porphyrin-containing compound metabolism; protoporphyrin-IX biosynthesis; 5-aminolevulinate from L-glutamyl-tRNA(Glu): step 1/2.</text>
</comment>
<comment type="subunit">
    <text evidence="1">Homodimer.</text>
</comment>
<comment type="domain">
    <text evidence="1">Possesses an unusual extended V-shaped dimeric structure with each monomer consisting of three distinct domains arranged along a curved 'spinal' alpha-helix. The N-terminal catalytic domain specifically recognizes the glutamate moiety of the substrate. The second domain is the NADPH-binding domain, and the third C-terminal domain is responsible for dimerization.</text>
</comment>
<comment type="miscellaneous">
    <text evidence="1">During catalysis, the active site Cys acts as a nucleophile attacking the alpha-carbonyl group of tRNA-bound glutamate with the formation of a thioester intermediate between enzyme and glutamate, and the concomitant release of tRNA(Glu). The thioester intermediate is finally reduced by direct hydride transfer from NADPH, to form the product GSA.</text>
</comment>
<comment type="similarity">
    <text evidence="1">Belongs to the glutamyl-tRNA reductase family.</text>
</comment>
<gene>
    <name evidence="1" type="primary">hemA</name>
    <name type="ordered locus">ABBFA_002775</name>
</gene>
<name>HEM1_ACIB3</name>
<evidence type="ECO:0000255" key="1">
    <source>
        <dbReference type="HAMAP-Rule" id="MF_00087"/>
    </source>
</evidence>
<feature type="chain" id="PRO_1000190500" description="Glutamyl-tRNA reductase">
    <location>
        <begin position="1"/>
        <end position="427"/>
    </location>
</feature>
<feature type="active site" description="Nucleophile" evidence="1">
    <location>
        <position position="50"/>
    </location>
</feature>
<feature type="binding site" evidence="1">
    <location>
        <begin position="49"/>
        <end position="52"/>
    </location>
    <ligand>
        <name>substrate</name>
    </ligand>
</feature>
<feature type="binding site" evidence="1">
    <location>
        <position position="105"/>
    </location>
    <ligand>
        <name>substrate</name>
    </ligand>
</feature>
<feature type="binding site" evidence="1">
    <location>
        <begin position="110"/>
        <end position="112"/>
    </location>
    <ligand>
        <name>substrate</name>
    </ligand>
</feature>
<feature type="binding site" evidence="1">
    <location>
        <position position="116"/>
    </location>
    <ligand>
        <name>substrate</name>
    </ligand>
</feature>
<feature type="binding site" evidence="1">
    <location>
        <begin position="185"/>
        <end position="190"/>
    </location>
    <ligand>
        <name>NADP(+)</name>
        <dbReference type="ChEBI" id="CHEBI:58349"/>
    </ligand>
</feature>
<feature type="site" description="Important for activity" evidence="1">
    <location>
        <position position="95"/>
    </location>
</feature>
<reference key="1">
    <citation type="journal article" date="2008" name="J. Bacteriol.">
        <title>Comparative genome sequence analysis of multidrug-resistant Acinetobacter baumannii.</title>
        <authorList>
            <person name="Adams M.D."/>
            <person name="Goglin K."/>
            <person name="Molyneaux N."/>
            <person name="Hujer K.M."/>
            <person name="Lavender H."/>
            <person name="Jamison J.J."/>
            <person name="MacDonald I.J."/>
            <person name="Martin K.M."/>
            <person name="Russo T."/>
            <person name="Campagnari A.A."/>
            <person name="Hujer A.M."/>
            <person name="Bonomo R.A."/>
            <person name="Gill S.R."/>
        </authorList>
    </citation>
    <scope>NUCLEOTIDE SEQUENCE [LARGE SCALE GENOMIC DNA]</scope>
    <source>
        <strain>AB307-0294</strain>
    </source>
</reference>
<proteinExistence type="inferred from homology"/>
<protein>
    <recommendedName>
        <fullName evidence="1">Glutamyl-tRNA reductase</fullName>
        <shortName evidence="1">GluTR</shortName>
        <ecNumber evidence="1">1.2.1.70</ecNumber>
    </recommendedName>
</protein>
<sequence>MSFFALGVNHQTASVELREQIAFNAERLSNLLAEQRHHESLKDLVVVSTCNRTEVYAMAEDAESLLKWLADANNIDVKQLIHHVYRYENAQAITHLMRVASGLDSLMLGEPQILGQVKSALALSKEAQTVSPELNSVFEYAFYAAKRVRSETAVGSHAVSMGYAVAQLALQVFSKPEKLTVMVVAAGEMNSLVAKHLAEMGVAKMIICNRSRERADQLAQEIAHQVEVEIIDFSDLAENLYRADVVSSCTGSLHQVIAYADVKTALKKRRYQQMLMVDLAVPRDIDPKVESLDGVYLYGVDDLQSVIDENLAQRRQAAVEAEVMVNQLATQLITHQKVKEAGSTIHAYRQHSEEISQRELTHALEALHHGGNPEQVLQQFAHRLTQKLIHPTSMLLREAAKAESPDYFEWLQQHLQDVFDHERKPKR</sequence>
<keyword id="KW-0521">NADP</keyword>
<keyword id="KW-0560">Oxidoreductase</keyword>
<keyword id="KW-0627">Porphyrin biosynthesis</keyword>
<accession>B7GYQ4</accession>
<organism>
    <name type="scientific">Acinetobacter baumannii (strain AB307-0294)</name>
    <dbReference type="NCBI Taxonomy" id="557600"/>
    <lineage>
        <taxon>Bacteria</taxon>
        <taxon>Pseudomonadati</taxon>
        <taxon>Pseudomonadota</taxon>
        <taxon>Gammaproteobacteria</taxon>
        <taxon>Moraxellales</taxon>
        <taxon>Moraxellaceae</taxon>
        <taxon>Acinetobacter</taxon>
        <taxon>Acinetobacter calcoaceticus/baumannii complex</taxon>
    </lineage>
</organism>